<proteinExistence type="inferred from homology"/>
<reference key="1">
    <citation type="journal article" date="1998" name="DNA Res.">
        <title>Structural analysis of Arabidopsis thaliana chromosome 5. VII. Sequence features of the regions of 1,013,767 bp covered by sixteen physically assigned P1 and TAC clones.</title>
        <authorList>
            <person name="Nakamura Y."/>
            <person name="Sato S."/>
            <person name="Asamizu E."/>
            <person name="Kaneko T."/>
            <person name="Kotani H."/>
            <person name="Miyajima N."/>
            <person name="Tabata S."/>
        </authorList>
    </citation>
    <scope>NUCLEOTIDE SEQUENCE [LARGE SCALE GENOMIC DNA]</scope>
    <source>
        <strain>cv. Columbia</strain>
    </source>
</reference>
<reference key="2">
    <citation type="journal article" date="2017" name="Plant J.">
        <title>Araport11: a complete reannotation of the Arabidopsis thaliana reference genome.</title>
        <authorList>
            <person name="Cheng C.Y."/>
            <person name="Krishnakumar V."/>
            <person name="Chan A.P."/>
            <person name="Thibaud-Nissen F."/>
            <person name="Schobel S."/>
            <person name="Town C.D."/>
        </authorList>
    </citation>
    <scope>GENOME REANNOTATION</scope>
    <source>
        <strain>cv. Columbia</strain>
    </source>
</reference>
<reference key="3">
    <citation type="journal article" date="2000" name="Plant Physiol.">
        <title>Purification of a jojoba embryo wax synthase, cloning of its cDNA, and production of high levels of wax in seeds of transgenic arabidopsis.</title>
        <authorList>
            <person name="Lardizabal K.D."/>
            <person name="Metz J.G."/>
            <person name="Sakamoto T."/>
            <person name="Hutton W.C."/>
            <person name="Pollard M.R."/>
            <person name="Lassner M.W."/>
        </authorList>
    </citation>
    <scope>IDENTIFICATION</scope>
</reference>
<accession>Q9FJ78</accession>
<feature type="chain" id="PRO_0000380683" description="Probable long-chain-alcohol O-fatty-acyltransferase 7">
    <location>
        <begin position="1"/>
        <end position="339"/>
    </location>
</feature>
<feature type="transmembrane region" description="Helical" evidence="2">
    <location>
        <begin position="7"/>
        <end position="27"/>
    </location>
</feature>
<feature type="transmembrane region" description="Helical" evidence="2">
    <location>
        <begin position="39"/>
        <end position="59"/>
    </location>
</feature>
<feature type="transmembrane region" description="Helical" evidence="2">
    <location>
        <begin position="113"/>
        <end position="133"/>
    </location>
</feature>
<feature type="transmembrane region" description="Helical" evidence="2">
    <location>
        <begin position="143"/>
        <end position="163"/>
    </location>
</feature>
<feature type="transmembrane region" description="Helical" evidence="2">
    <location>
        <begin position="226"/>
        <end position="246"/>
    </location>
</feature>
<feature type="transmembrane region" description="Helical" evidence="2">
    <location>
        <begin position="254"/>
        <end position="274"/>
    </location>
</feature>
<feature type="transmembrane region" description="Helical" evidence="2">
    <location>
        <begin position="287"/>
        <end position="307"/>
    </location>
</feature>
<sequence>MEEEIKSLINVGFLTIISVSYCYCLPPRIKSGVLRLLSIFPVCVLLVVLPLFFSFSIFTSTTAFFLSAIANSRLILFSFDQGPLFPLPSNLFRFTCFTCFPIQRQQNPKSQDHLSTYVFPVKIAIFVVLLYVHNDIQNLPRTFLLCLHPLYVYLLLEILLTLLRILMTIILGCDLEPHFHEPYLATSLQDFWGRRWNLIVSASLRAIVYTPVRRVCQRVMSSDYAMLIGVFATFVTSGVAHEVVFFYITRAMPTGEVALFFLLHGVCTVAEVAAKRTAFVRRWPVRPVVSWMFTIAFVNVTAGWLFFPQLIRNNLGERCSNEISLLIDFFRSKLFYFPQ</sequence>
<organism>
    <name type="scientific">Arabidopsis thaliana</name>
    <name type="common">Mouse-ear cress</name>
    <dbReference type="NCBI Taxonomy" id="3702"/>
    <lineage>
        <taxon>Eukaryota</taxon>
        <taxon>Viridiplantae</taxon>
        <taxon>Streptophyta</taxon>
        <taxon>Embryophyta</taxon>
        <taxon>Tracheophyta</taxon>
        <taxon>Spermatophyta</taxon>
        <taxon>Magnoliopsida</taxon>
        <taxon>eudicotyledons</taxon>
        <taxon>Gunneridae</taxon>
        <taxon>Pentapetalae</taxon>
        <taxon>rosids</taxon>
        <taxon>malvids</taxon>
        <taxon>Brassicales</taxon>
        <taxon>Brassicaceae</taxon>
        <taxon>Camelineae</taxon>
        <taxon>Arabidopsis</taxon>
    </lineage>
</organism>
<keyword id="KW-0012">Acyltransferase</keyword>
<keyword id="KW-0444">Lipid biosynthesis</keyword>
<keyword id="KW-0443">Lipid metabolism</keyword>
<keyword id="KW-0472">Membrane</keyword>
<keyword id="KW-1185">Reference proteome</keyword>
<keyword id="KW-0808">Transferase</keyword>
<keyword id="KW-0812">Transmembrane</keyword>
<keyword id="KW-1133">Transmembrane helix</keyword>
<protein>
    <recommendedName>
        <fullName>Probable long-chain-alcohol O-fatty-acyltransferase 7</fullName>
        <ecNumber>2.3.1.75</ecNumber>
    </recommendedName>
    <alternativeName>
        <fullName>Wax synthase 7</fullName>
    </alternativeName>
</protein>
<comment type="function">
    <text evidence="1">Catalyzes the final step in the synthesis of long-chain linear esters (waxes).</text>
</comment>
<comment type="catalytic activity">
    <reaction>
        <text>a long chain fatty alcohol + a fatty acyl-CoA = a wax ester + CoA</text>
        <dbReference type="Rhea" id="RHEA:38443"/>
        <dbReference type="ChEBI" id="CHEBI:10036"/>
        <dbReference type="ChEBI" id="CHEBI:17135"/>
        <dbReference type="ChEBI" id="CHEBI:57287"/>
        <dbReference type="ChEBI" id="CHEBI:77636"/>
        <dbReference type="EC" id="2.3.1.75"/>
    </reaction>
</comment>
<comment type="subcellular location">
    <subcellularLocation>
        <location evidence="3">Membrane</location>
        <topology evidence="3">Multi-pass membrane protein</topology>
    </subcellularLocation>
</comment>
<comment type="similarity">
    <text evidence="3">Belongs to the wax synthase family.</text>
</comment>
<gene>
    <name type="primary">AT7</name>
    <name type="ordered locus">At5g55320</name>
    <name type="ORF">MTE17.3</name>
</gene>
<name>WAXS7_ARATH</name>
<dbReference type="EC" id="2.3.1.75"/>
<dbReference type="EMBL" id="AB015479">
    <property type="protein sequence ID" value="BAB08549.1"/>
    <property type="molecule type" value="Genomic_DNA"/>
</dbReference>
<dbReference type="EMBL" id="CP002688">
    <property type="protein sequence ID" value="AED96616.1"/>
    <property type="molecule type" value="Genomic_DNA"/>
</dbReference>
<dbReference type="RefSeq" id="NP_200343.1">
    <property type="nucleotide sequence ID" value="NM_124914.2"/>
</dbReference>
<dbReference type="STRING" id="3702.Q9FJ78"/>
<dbReference type="iPTMnet" id="Q9FJ78"/>
<dbReference type="PaxDb" id="3702-AT5G55320.1"/>
<dbReference type="EnsemblPlants" id="AT5G55320.1">
    <property type="protein sequence ID" value="AT5G55320.1"/>
    <property type="gene ID" value="AT5G55320"/>
</dbReference>
<dbReference type="GeneID" id="835625"/>
<dbReference type="Gramene" id="AT5G55320.1">
    <property type="protein sequence ID" value="AT5G55320.1"/>
    <property type="gene ID" value="AT5G55320"/>
</dbReference>
<dbReference type="KEGG" id="ath:AT5G55320"/>
<dbReference type="Araport" id="AT5G55320"/>
<dbReference type="TAIR" id="AT5G55320"/>
<dbReference type="eggNOG" id="ENOG502SGJ4">
    <property type="taxonomic scope" value="Eukaryota"/>
</dbReference>
<dbReference type="HOGENOM" id="CLU_045902_0_0_1"/>
<dbReference type="InParanoid" id="Q9FJ78"/>
<dbReference type="OMA" id="QANEPYL"/>
<dbReference type="PhylomeDB" id="Q9FJ78"/>
<dbReference type="BioCyc" id="ARA:AT5G55320-MONOMER"/>
<dbReference type="BRENDA" id="2.3.1.75">
    <property type="organism ID" value="399"/>
</dbReference>
<dbReference type="PRO" id="PR:Q9FJ78"/>
<dbReference type="Proteomes" id="UP000006548">
    <property type="component" value="Chromosome 5"/>
</dbReference>
<dbReference type="ExpressionAtlas" id="Q9FJ78">
    <property type="expression patterns" value="baseline and differential"/>
</dbReference>
<dbReference type="GO" id="GO:0016020">
    <property type="term" value="C:membrane"/>
    <property type="evidence" value="ECO:0007669"/>
    <property type="project" value="UniProtKB-SubCell"/>
</dbReference>
<dbReference type="GO" id="GO:0047196">
    <property type="term" value="F:long-chain-alcohol O-fatty-acyltransferase activity"/>
    <property type="evidence" value="ECO:0007669"/>
    <property type="project" value="UniProtKB-EC"/>
</dbReference>
<dbReference type="GO" id="GO:0006629">
    <property type="term" value="P:lipid metabolic process"/>
    <property type="evidence" value="ECO:0007669"/>
    <property type="project" value="UniProtKB-KW"/>
</dbReference>
<dbReference type="InterPro" id="IPR044851">
    <property type="entry name" value="Wax_synthase"/>
</dbReference>
<dbReference type="InterPro" id="IPR032805">
    <property type="entry name" value="Wax_synthase_dom"/>
</dbReference>
<dbReference type="InterPro" id="IPR017088">
    <property type="entry name" value="Wax_synthase_Magnoliopsida"/>
</dbReference>
<dbReference type="PANTHER" id="PTHR31595">
    <property type="entry name" value="LONG-CHAIN-ALCOHOL O-FATTY-ACYLTRANSFERASE 3-RELATED"/>
    <property type="match status" value="1"/>
</dbReference>
<dbReference type="PANTHER" id="PTHR31595:SF31">
    <property type="entry name" value="LONG-CHAIN-ALCOHOL O-FATTY-ACYLTRANSFERASE 7-RELATED"/>
    <property type="match status" value="1"/>
</dbReference>
<dbReference type="Pfam" id="PF13813">
    <property type="entry name" value="MBOAT_2"/>
    <property type="match status" value="1"/>
</dbReference>
<dbReference type="PIRSF" id="PIRSF037006">
    <property type="entry name" value="Wax_synthase"/>
    <property type="match status" value="1"/>
</dbReference>
<evidence type="ECO:0000250" key="1"/>
<evidence type="ECO:0000255" key="2"/>
<evidence type="ECO:0000305" key="3"/>